<protein>
    <recommendedName>
        <fullName>Angiotensinogen</fullName>
    </recommendedName>
    <alternativeName>
        <fullName>Serpin A8</fullName>
    </alternativeName>
    <component>
        <recommendedName>
            <fullName>Angiotensin-1</fullName>
        </recommendedName>
        <alternativeName>
            <fullName>Angiotensin 1-10</fullName>
        </alternativeName>
        <alternativeName>
            <fullName>Angiotensin I</fullName>
            <shortName>Ang I</shortName>
        </alternativeName>
    </component>
    <component>
        <recommendedName>
            <fullName>Angiotensin-2</fullName>
        </recommendedName>
        <alternativeName>
            <fullName>Angiotensin 1-8</fullName>
        </alternativeName>
        <alternativeName>
            <fullName>Angiotensin II</fullName>
            <shortName>Ang II</shortName>
        </alternativeName>
    </component>
    <component>
        <recommendedName>
            <fullName>Angiotensin-3</fullName>
        </recommendedName>
        <alternativeName>
            <fullName>Angiotensin 2-8</fullName>
        </alternativeName>
        <alternativeName>
            <fullName>Angiotensin III</fullName>
            <shortName>Ang III</shortName>
        </alternativeName>
        <alternativeName>
            <fullName>Des-Asp[1]-angiotensin II</fullName>
        </alternativeName>
    </component>
    <component>
        <recommendedName>
            <fullName>Angiotensin-4</fullName>
        </recommendedName>
        <alternativeName>
            <fullName>Angiotensin 3-8</fullName>
        </alternativeName>
        <alternativeName>
            <fullName>Angiotensin IV</fullName>
            <shortName>Ang IV</shortName>
        </alternativeName>
    </component>
    <component>
        <recommendedName>
            <fullName>Angiotensin 1-9</fullName>
        </recommendedName>
    </component>
    <component>
        <recommendedName>
            <fullName>Angiotensin 1-7</fullName>
        </recommendedName>
    </component>
    <component>
        <recommendedName>
            <fullName>Angiotensin 1-5</fullName>
        </recommendedName>
    </component>
    <component>
        <recommendedName>
            <fullName>Angiotensin 1-4</fullName>
        </recommendedName>
    </component>
</protein>
<evidence type="ECO:0000250" key="1"/>
<evidence type="ECO:0000250" key="2">
    <source>
        <dbReference type="UniProtKB" id="P01015"/>
    </source>
</evidence>
<evidence type="ECO:0000250" key="3">
    <source>
        <dbReference type="UniProtKB" id="P01019"/>
    </source>
</evidence>
<evidence type="ECO:0000250" key="4">
    <source>
        <dbReference type="UniProtKB" id="P11859"/>
    </source>
</evidence>
<evidence type="ECO:0000255" key="5"/>
<evidence type="ECO:0000305" key="6"/>
<organism>
    <name type="scientific">Pan troglodytes</name>
    <name type="common">Chimpanzee</name>
    <dbReference type="NCBI Taxonomy" id="9598"/>
    <lineage>
        <taxon>Eukaryota</taxon>
        <taxon>Metazoa</taxon>
        <taxon>Chordata</taxon>
        <taxon>Craniata</taxon>
        <taxon>Vertebrata</taxon>
        <taxon>Euteleostomi</taxon>
        <taxon>Mammalia</taxon>
        <taxon>Eutheria</taxon>
        <taxon>Euarchontoglires</taxon>
        <taxon>Primates</taxon>
        <taxon>Haplorrhini</taxon>
        <taxon>Catarrhini</taxon>
        <taxon>Hominidae</taxon>
        <taxon>Pan</taxon>
    </lineage>
</organism>
<reference key="1">
    <citation type="journal article" date="2000" name="Genomics">
        <title>Human-chimpanzee DNA sequence variation in the four major genes of the renin angiotensin system.</title>
        <authorList>
            <person name="Dufour C."/>
            <person name="Casane D."/>
            <person name="Denton D."/>
            <person name="Wickings J."/>
            <person name="Corvol P."/>
            <person name="Jeunemaitre X."/>
        </authorList>
    </citation>
    <scope>NUCLEOTIDE SEQUENCE [GENOMIC DNA]</scope>
</reference>
<reference key="2">
    <citation type="submission" date="1999-09" db="EMBL/GenBank/DDBJ databases">
        <title>Germline mutations in the angiotensinogen gene cause predisposition to type 1 diabetes mellitus.</title>
        <authorList>
            <person name="Shattuck-Eidens D."/>
            <person name="McGrail M."/>
            <person name="Stone S."/>
        </authorList>
    </citation>
    <scope>NUCLEOTIDE SEQUENCE [MRNA]</scope>
</reference>
<keyword id="KW-1015">Disulfide bond</keyword>
<keyword id="KW-0325">Glycoprotein</keyword>
<keyword id="KW-1185">Reference proteome</keyword>
<keyword id="KW-0964">Secreted</keyword>
<keyword id="KW-0732">Signal</keyword>
<keyword id="KW-0838">Vasoactive</keyword>
<keyword id="KW-0839">Vasoconstrictor</keyword>
<dbReference type="EMBL" id="AF193461">
    <property type="protein sequence ID" value="AAG30306.1"/>
    <property type="status" value="ALT_INIT"/>
    <property type="molecule type" value="Genomic_DNA"/>
</dbReference>
<dbReference type="EMBL" id="AF193458">
    <property type="protein sequence ID" value="AAG30306.1"/>
    <property type="status" value="JOINED"/>
    <property type="molecule type" value="Genomic_DNA"/>
</dbReference>
<dbReference type="EMBL" id="AF193459">
    <property type="protein sequence ID" value="AAG30306.1"/>
    <property type="status" value="JOINED"/>
    <property type="molecule type" value="Genomic_DNA"/>
</dbReference>
<dbReference type="EMBL" id="AF193460">
    <property type="protein sequence ID" value="AAG30306.1"/>
    <property type="status" value="JOINED"/>
    <property type="molecule type" value="Genomic_DNA"/>
</dbReference>
<dbReference type="EMBL" id="AF188487">
    <property type="protein sequence ID" value="AAG29056.1"/>
    <property type="status" value="ALT_INIT"/>
    <property type="molecule type" value="mRNA"/>
</dbReference>
<dbReference type="RefSeq" id="NP_001009032.1">
    <property type="nucleotide sequence ID" value="NM_001009032.1"/>
</dbReference>
<dbReference type="SMR" id="Q9GLN8"/>
<dbReference type="FunCoup" id="Q9GLN8">
    <property type="interactions" value="884"/>
</dbReference>
<dbReference type="STRING" id="9598.ENSPTRP00000003543"/>
<dbReference type="MEROPS" id="I04.953"/>
<dbReference type="GlyCosmos" id="Q9GLN8">
    <property type="glycosylation" value="4 sites, No reported glycans"/>
</dbReference>
<dbReference type="PaxDb" id="9598-ENSPTRP00000003543"/>
<dbReference type="GeneID" id="450104"/>
<dbReference type="KEGG" id="ptr:450104"/>
<dbReference type="CTD" id="183"/>
<dbReference type="eggNOG" id="KOG2392">
    <property type="taxonomic scope" value="Eukaryota"/>
</dbReference>
<dbReference type="InParanoid" id="Q9GLN8"/>
<dbReference type="OrthoDB" id="5020at9604"/>
<dbReference type="Proteomes" id="UP000002277">
    <property type="component" value="Unplaced"/>
</dbReference>
<dbReference type="GO" id="GO:0005615">
    <property type="term" value="C:extracellular space"/>
    <property type="evidence" value="ECO:0000318"/>
    <property type="project" value="GO_Central"/>
</dbReference>
<dbReference type="GO" id="GO:0004867">
    <property type="term" value="F:serine-type endopeptidase inhibitor activity"/>
    <property type="evidence" value="ECO:0000318"/>
    <property type="project" value="GO_Central"/>
</dbReference>
<dbReference type="GO" id="GO:0010718">
    <property type="term" value="P:positive regulation of epithelial to mesenchymal transition"/>
    <property type="evidence" value="ECO:0000250"/>
    <property type="project" value="UniProtKB"/>
</dbReference>
<dbReference type="GO" id="GO:0042981">
    <property type="term" value="P:regulation of apoptotic process"/>
    <property type="evidence" value="ECO:0000318"/>
    <property type="project" value="GO_Central"/>
</dbReference>
<dbReference type="GO" id="GO:0003081">
    <property type="term" value="P:regulation of systemic arterial blood pressure by renin-angiotensin"/>
    <property type="evidence" value="ECO:0007669"/>
    <property type="project" value="InterPro"/>
</dbReference>
<dbReference type="GO" id="GO:1990776">
    <property type="term" value="P:response to angiotensin"/>
    <property type="evidence" value="ECO:0000318"/>
    <property type="project" value="GO_Central"/>
</dbReference>
<dbReference type="GO" id="GO:0042310">
    <property type="term" value="P:vasoconstriction"/>
    <property type="evidence" value="ECO:0007669"/>
    <property type="project" value="UniProtKB-KW"/>
</dbReference>
<dbReference type="CDD" id="cd02054">
    <property type="entry name" value="serpinA8_AGT"/>
    <property type="match status" value="1"/>
</dbReference>
<dbReference type="FunFam" id="2.30.39.10:FF:000018">
    <property type="entry name" value="Angiotensinogen"/>
    <property type="match status" value="1"/>
</dbReference>
<dbReference type="Gene3D" id="2.30.39.10">
    <property type="entry name" value="Alpha-1-antitrypsin, domain 1"/>
    <property type="match status" value="1"/>
</dbReference>
<dbReference type="Gene3D" id="3.30.497.10">
    <property type="entry name" value="Antithrombin, subunit I, domain 2"/>
    <property type="match status" value="1"/>
</dbReference>
<dbReference type="InterPro" id="IPR000227">
    <property type="entry name" value="Angiotensinogen"/>
</dbReference>
<dbReference type="InterPro" id="IPR033834">
    <property type="entry name" value="Angiotensinogen_serpin_dom"/>
</dbReference>
<dbReference type="InterPro" id="IPR023795">
    <property type="entry name" value="Serpin_CS"/>
</dbReference>
<dbReference type="InterPro" id="IPR023796">
    <property type="entry name" value="Serpin_dom"/>
</dbReference>
<dbReference type="InterPro" id="IPR000215">
    <property type="entry name" value="Serpin_fam"/>
</dbReference>
<dbReference type="InterPro" id="IPR036186">
    <property type="entry name" value="Serpin_sf"/>
</dbReference>
<dbReference type="InterPro" id="IPR042178">
    <property type="entry name" value="Serpin_sf_1"/>
</dbReference>
<dbReference type="InterPro" id="IPR042185">
    <property type="entry name" value="Serpin_sf_2"/>
</dbReference>
<dbReference type="PANTHER" id="PTHR11461:SF13">
    <property type="entry name" value="ANGIOTENSINOGEN"/>
    <property type="match status" value="1"/>
</dbReference>
<dbReference type="PANTHER" id="PTHR11461">
    <property type="entry name" value="SERINE PROTEASE INHIBITOR, SERPIN"/>
    <property type="match status" value="1"/>
</dbReference>
<dbReference type="Pfam" id="PF00079">
    <property type="entry name" value="Serpin"/>
    <property type="match status" value="1"/>
</dbReference>
<dbReference type="PRINTS" id="PR00654">
    <property type="entry name" value="ANGIOTENSNGN"/>
</dbReference>
<dbReference type="SMART" id="SM00093">
    <property type="entry name" value="SERPIN"/>
    <property type="match status" value="1"/>
</dbReference>
<dbReference type="SUPFAM" id="SSF56574">
    <property type="entry name" value="Serpins"/>
    <property type="match status" value="1"/>
</dbReference>
<dbReference type="PROSITE" id="PS00284">
    <property type="entry name" value="SERPIN"/>
    <property type="match status" value="1"/>
</dbReference>
<proteinExistence type="evidence at transcript level"/>
<name>ANGT_PANTR</name>
<feature type="signal peptide" evidence="5">
    <location>
        <begin position="1"/>
        <end position="24"/>
    </location>
</feature>
<feature type="chain" id="PRO_0000032464" description="Angiotensinogen">
    <location>
        <begin position="25"/>
        <end position="476"/>
    </location>
</feature>
<feature type="peptide" id="PRO_0000032465" description="Angiotensin-1" evidence="3">
    <location>
        <begin position="25"/>
        <end position="34"/>
    </location>
</feature>
<feature type="peptide" id="PRO_0000420669" description="Angiotensin 1-9" evidence="3">
    <location>
        <begin position="25"/>
        <end position="33"/>
    </location>
</feature>
<feature type="peptide" id="PRO_0000032466" description="Angiotensin-2" evidence="3">
    <location>
        <begin position="25"/>
        <end position="32"/>
    </location>
</feature>
<feature type="peptide" id="PRO_0000420670" description="Angiotensin 1-7" evidence="3">
    <location>
        <begin position="25"/>
        <end position="31"/>
    </location>
</feature>
<feature type="peptide" id="PRO_0000420671" description="Angiotensin 1-5" evidence="3">
    <location>
        <begin position="25"/>
        <end position="29"/>
    </location>
</feature>
<feature type="peptide" id="PRO_0000420672" description="Angiotensin 1-4" evidence="3">
    <location>
        <begin position="25"/>
        <end position="28"/>
    </location>
</feature>
<feature type="peptide" id="PRO_0000032467" description="Angiotensin-3" evidence="3">
    <location>
        <begin position="26"/>
        <end position="32"/>
    </location>
</feature>
<feature type="peptide" id="PRO_0000420673" description="Angiotensin-4" evidence="3">
    <location>
        <begin position="27"/>
        <end position="32"/>
    </location>
</feature>
<feature type="glycosylation site" description="N-linked (GlcNAc...) asparagine" evidence="5">
    <location>
        <position position="38"/>
    </location>
</feature>
<feature type="glycosylation site" description="N-linked (GlcNAc...) asparagine" evidence="5">
    <location>
        <position position="161"/>
    </location>
</feature>
<feature type="glycosylation site" description="N-linked (GlcNAc...) asparagine" evidence="5">
    <location>
        <position position="295"/>
    </location>
</feature>
<feature type="glycosylation site" description="N-linked (GlcNAc...) asparagine" evidence="5">
    <location>
        <position position="319"/>
    </location>
</feature>
<feature type="disulfide bond" evidence="1">
    <location>
        <begin position="42"/>
        <end position="162"/>
    </location>
</feature>
<feature type="sequence conflict" description="In Ref. 2; AAG29056." evidence="6" ref="2">
    <original>M</original>
    <variation>T</variation>
    <location>
        <position position="259"/>
    </location>
</feature>
<feature type="sequence conflict" description="In Ref. 2; AAG29056." evidence="6" ref="2">
    <original>A</original>
    <variation>T</variation>
    <location>
        <position position="367"/>
    </location>
</feature>
<accession>Q9GLN8</accession>
<accession>Q9GLP7</accession>
<sequence length="476" mass="52026">MAPAGVSLRATILCLVAWAGLAAGDRVYIHPFHLVIHNESTCEQLAKANAGKPKDPTFIPAPIQAKTSPVDEKALQDQLVLVAAKLDTEDKLRAAMVGMLANFLGFRIYGMHSELWGVVHGATVLSPTAIFGTLASLYLGALDHTADRLQAILGVPWKDKNCTSRLDAHKVLSALQAVQGLLVAQGRADSQAQLLLSTVVGVFTAPGLHLKQPFVQGLALYTPVVLPRSLDFTELDVAAEKIDRFMQAVTGWKTGCSLMGASVDSTLAFNTYVHFQGKMKGFSLLAEPQEFWVDNSTSVSVPMLSGMGTFQHWSDVQDNFSVTQVPFTESACLLLIQPHYASDLDKVEGLTFQQNSLNWMKKLSPRAIHLTMPQLVLQGSYDLQDLLAQAELPAILHTELNLQKLSNDRIRVGEVLNSIFFELEADEREPTESTQQLNKPEVLEVTLNRPFLFAVYDQSATALHFLGRVANPLSTA</sequence>
<comment type="function">
    <text evidence="3">Essential component of the renin-angiotensin system (RAS), a potent regulator of blood pressure, body fluid and electrolyte homeostasis.</text>
</comment>
<comment type="function">
    <molecule>Angiotensin-2</molecule>
    <text evidence="2 3">Acts directly on vascular smooth muscle as a potent vasoconstrictor, affects cardiac contractility and heart rate through its action on the sympathetic nervous system, and alters renal sodium and water absorption through its ability to stimulate the zona glomerulosa cells of the adrenal cortex to synthesize and secrete aldosterone. Acts by binding to angiotensin receptors AGTR1 and AGTR2. Also binds the DEAR/FBXW7-AS1 receptor.</text>
</comment>
<comment type="function">
    <molecule>Angiotensin-3</molecule>
    <text evidence="3">Stimulates aldosterone release.</text>
</comment>
<comment type="function">
    <molecule>Angiotensin 1-7</molecule>
    <text evidence="4">Is a ligand for the G-protein coupled receptor MAS1. Has vasodilator and antidiuretic effects. Has an antithrombotic effect that involves MAS1-mediated release of nitric oxide from platelets.</text>
</comment>
<comment type="subcellular location">
    <subcellularLocation>
        <location evidence="3">Secreted</location>
    </subcellularLocation>
</comment>
<comment type="PTM">
    <text evidence="3">In response to low blood pressure, the enzyme renin/REN cleaves angiotensinogen to produce angiotensin-1. Angiotensin-1 is a substrate of ACE (angiotensin converting enzyme) that removes a dipeptide to yield the physiologically active peptide angiotensin-2. Angiotensin-1 and angiotensin-2 can be further processed to generate angiotensin-3, angiotensin-4. Angiotensin 1-9 is cleaved from angiotensin-1 by ACE2 and can be further processed by ACE to produce angiotensin 1-7, angiotensin 1-5 and angiotensin 1-4. Angiotensin 1-7 has also been proposed to be cleaved from angiotensin-2 by ACE2 or from angiotensin-1 by MME (neprilysin) (By similarity).</text>
</comment>
<comment type="PTM">
    <text evidence="3">The disulfide bond is labile. Angiotensinogen is present in the circulation in a near 40:60 ratio with the oxidized disulfide-bonded form, which preferentially interacts with receptor-bound renin (By similarity).</text>
</comment>
<comment type="similarity">
    <text evidence="6">Belongs to the serpin family.</text>
</comment>
<comment type="sequence caution" evidence="6">
    <conflict type="erroneous initiation">
        <sequence resource="EMBL-CDS" id="AAG29056"/>
    </conflict>
    <text>Extended N-terminus.</text>
</comment>
<comment type="sequence caution" evidence="6">
    <conflict type="erroneous initiation">
        <sequence resource="EMBL-CDS" id="AAG30306"/>
    </conflict>
    <text>Extended N-terminus.</text>
</comment>
<gene>
    <name type="primary">AGT</name>
    <name type="synonym">SERPINA8</name>
</gene>